<organism>
    <name type="scientific">Corynebacterium efficiens (strain DSM 44549 / YS-314 / AJ 12310 / JCM 11189 / NBRC 100395)</name>
    <dbReference type="NCBI Taxonomy" id="196164"/>
    <lineage>
        <taxon>Bacteria</taxon>
        <taxon>Bacillati</taxon>
        <taxon>Actinomycetota</taxon>
        <taxon>Actinomycetes</taxon>
        <taxon>Mycobacteriales</taxon>
        <taxon>Corynebacteriaceae</taxon>
        <taxon>Corynebacterium</taxon>
    </lineage>
</organism>
<evidence type="ECO:0000255" key="1">
    <source>
        <dbReference type="HAMAP-Rule" id="MF_01212"/>
    </source>
</evidence>
<evidence type="ECO:0000255" key="2">
    <source>
        <dbReference type="PROSITE-ProRule" id="PRU01175"/>
    </source>
</evidence>
<evidence type="ECO:0000256" key="3">
    <source>
        <dbReference type="SAM" id="MobiDB-lite"/>
    </source>
</evidence>
<proteinExistence type="inferred from homology"/>
<protein>
    <recommendedName>
        <fullName evidence="1">Deoxyguanosinetriphosphate triphosphohydrolase-like protein</fullName>
    </recommendedName>
</protein>
<name>DGTL1_COREF</name>
<comment type="similarity">
    <text evidence="1">Belongs to the dGTPase family. Type 2 subfamily.</text>
</comment>
<gene>
    <name type="ordered locus">CE2173</name>
</gene>
<dbReference type="EMBL" id="BA000035">
    <property type="protein sequence ID" value="BAC18983.1"/>
    <property type="molecule type" value="Genomic_DNA"/>
</dbReference>
<dbReference type="RefSeq" id="WP_006768176.1">
    <property type="nucleotide sequence ID" value="NC_004369.1"/>
</dbReference>
<dbReference type="SMR" id="Q8FNH1"/>
<dbReference type="STRING" id="196164.gene:10742604"/>
<dbReference type="KEGG" id="cef:CE2173"/>
<dbReference type="eggNOG" id="COG0232">
    <property type="taxonomic scope" value="Bacteria"/>
</dbReference>
<dbReference type="HOGENOM" id="CLU_028163_0_1_11"/>
<dbReference type="OrthoDB" id="9803619at2"/>
<dbReference type="Proteomes" id="UP000001409">
    <property type="component" value="Chromosome"/>
</dbReference>
<dbReference type="GO" id="GO:0008832">
    <property type="term" value="F:dGTPase activity"/>
    <property type="evidence" value="ECO:0007669"/>
    <property type="project" value="TreeGrafter"/>
</dbReference>
<dbReference type="GO" id="GO:0006203">
    <property type="term" value="P:dGTP catabolic process"/>
    <property type="evidence" value="ECO:0007669"/>
    <property type="project" value="TreeGrafter"/>
</dbReference>
<dbReference type="CDD" id="cd00077">
    <property type="entry name" value="HDc"/>
    <property type="match status" value="1"/>
</dbReference>
<dbReference type="Gene3D" id="1.10.3210.10">
    <property type="entry name" value="Hypothetical protein af1432"/>
    <property type="match status" value="1"/>
</dbReference>
<dbReference type="HAMAP" id="MF_01212">
    <property type="entry name" value="dGTPase_type2"/>
    <property type="match status" value="1"/>
</dbReference>
<dbReference type="InterPro" id="IPR006261">
    <property type="entry name" value="dGTPase"/>
</dbReference>
<dbReference type="InterPro" id="IPR050135">
    <property type="entry name" value="dGTPase-like"/>
</dbReference>
<dbReference type="InterPro" id="IPR023023">
    <property type="entry name" value="dNTPase_2"/>
</dbReference>
<dbReference type="InterPro" id="IPR003607">
    <property type="entry name" value="HD/PDEase_dom"/>
</dbReference>
<dbReference type="InterPro" id="IPR006674">
    <property type="entry name" value="HD_domain"/>
</dbReference>
<dbReference type="InterPro" id="IPR026875">
    <property type="entry name" value="PHydrolase_assoc_dom"/>
</dbReference>
<dbReference type="NCBIfam" id="TIGR01353">
    <property type="entry name" value="dGTP_triPase"/>
    <property type="match status" value="1"/>
</dbReference>
<dbReference type="NCBIfam" id="NF002829">
    <property type="entry name" value="PRK03007.1"/>
    <property type="match status" value="1"/>
</dbReference>
<dbReference type="PANTHER" id="PTHR11373:SF32">
    <property type="entry name" value="DEOXYGUANOSINETRIPHOSPHATE TRIPHOSPHOHYDROLASE"/>
    <property type="match status" value="1"/>
</dbReference>
<dbReference type="PANTHER" id="PTHR11373">
    <property type="entry name" value="DEOXYNUCLEOSIDE TRIPHOSPHATE TRIPHOSPHOHYDROLASE"/>
    <property type="match status" value="1"/>
</dbReference>
<dbReference type="Pfam" id="PF01966">
    <property type="entry name" value="HD"/>
    <property type="match status" value="1"/>
</dbReference>
<dbReference type="Pfam" id="PF13286">
    <property type="entry name" value="HD_assoc"/>
    <property type="match status" value="1"/>
</dbReference>
<dbReference type="SMART" id="SM00471">
    <property type="entry name" value="HDc"/>
    <property type="match status" value="1"/>
</dbReference>
<dbReference type="SUPFAM" id="SSF109604">
    <property type="entry name" value="HD-domain/PDEase-like"/>
    <property type="match status" value="1"/>
</dbReference>
<dbReference type="PROSITE" id="PS51831">
    <property type="entry name" value="HD"/>
    <property type="match status" value="1"/>
</dbReference>
<keyword id="KW-0378">Hydrolase</keyword>
<keyword id="KW-1185">Reference proteome</keyword>
<reference key="1">
    <citation type="journal article" date="2003" name="Genome Res.">
        <title>Comparative complete genome sequence analysis of the amino acid replacements responsible for the thermostability of Corynebacterium efficiens.</title>
        <authorList>
            <person name="Nishio Y."/>
            <person name="Nakamura Y."/>
            <person name="Kawarabayasi Y."/>
            <person name="Usuda Y."/>
            <person name="Kimura E."/>
            <person name="Sugimoto S."/>
            <person name="Matsui K."/>
            <person name="Yamagishi A."/>
            <person name="Kikuchi H."/>
            <person name="Ikeo K."/>
            <person name="Gojobori T."/>
        </authorList>
    </citation>
    <scope>NUCLEOTIDE SEQUENCE [LARGE SCALE GENOMIC DNA]</scope>
    <source>
        <strain>DSM 44549 / YS-314 / AJ 12310 / JCM 11189 / NBRC 100395</strain>
    </source>
</reference>
<accession>Q8FNH1</accession>
<feature type="chain" id="PRO_0000205301" description="Deoxyguanosinetriphosphate triphosphohydrolase-like protein">
    <location>
        <begin position="1"/>
        <end position="426"/>
    </location>
</feature>
<feature type="domain" description="HD" evidence="2">
    <location>
        <begin position="67"/>
        <end position="217"/>
    </location>
</feature>
<feature type="region of interest" description="Disordered" evidence="3">
    <location>
        <begin position="1"/>
        <end position="23"/>
    </location>
</feature>
<sequence>MYPYSESDAQRLHQEAPKASQLAHSEVDLRSDFSRDRARVLHSAALRRLADKTQVVGPRDGDTPRTRLTHSLEVAQIARGMGSGLGLDPELSELAGLCHDIGHPPYGHNGEKALNEVAAACGGFEGNAQTLRILTRLEPKVVSADGTSFGLNLTRAALDAACKYPWTKTSPDGTINRKYGAYDEDAHILEWVRRGHTDLRPSLEAQTMDFSDDIAYSVHDVEDGIVAGRIDLKVLWDLVELAALAQKGARAFGGDPEELIEGAATLRELPVVAAAADFDASLSSYAALKAMTSELVGRYVGSTIAATRAAARLGEYEFGRMHGELVIRPEADREVRLLKTLAVLYVMDDPGHLARQDRQRDRIFRVFDYLTLGAPGSLDPMYRQWFLEADDDAGRARVVVDQIASMTESRLERLARNASGISGFLG</sequence>